<reference key="1">
    <citation type="journal article" date="2001" name="Zool. Sci.">
        <title>Low genetic diversity in Japanese populations of the Eurasian badger Meles meles (Mustelidae, Carnivora) revealed by mitochondrial cytochrome b gene sequences.</title>
        <authorList>
            <person name="Kurose N."/>
            <person name="Kaneko Y."/>
            <person name="Abramov A.V."/>
            <person name="Siriaroonrat B."/>
            <person name="Masuda R."/>
        </authorList>
    </citation>
    <scope>NUCLEOTIDE SEQUENCE [GENOMIC DNA]</scope>
    <source>
        <strain>Isolate MEL-ZUD36</strain>
    </source>
</reference>
<evidence type="ECO:0000250" key="1"/>
<evidence type="ECO:0000250" key="2">
    <source>
        <dbReference type="UniProtKB" id="P00157"/>
    </source>
</evidence>
<evidence type="ECO:0000255" key="3">
    <source>
        <dbReference type="PROSITE-ProRule" id="PRU00967"/>
    </source>
</evidence>
<evidence type="ECO:0000255" key="4">
    <source>
        <dbReference type="PROSITE-ProRule" id="PRU00968"/>
    </source>
</evidence>
<accession>Q8WGL0</accession>
<gene>
    <name type="primary">MT-CYB</name>
    <name type="synonym">COB</name>
    <name type="synonym">CYTB</name>
    <name type="synonym">MTCYB</name>
</gene>
<feature type="chain" id="PRO_0000061169" description="Cytochrome b">
    <location>
        <begin position="1"/>
        <end position="379"/>
    </location>
</feature>
<feature type="transmembrane region" description="Helical" evidence="2">
    <location>
        <begin position="33"/>
        <end position="53"/>
    </location>
</feature>
<feature type="transmembrane region" description="Helical" evidence="2">
    <location>
        <begin position="77"/>
        <end position="98"/>
    </location>
</feature>
<feature type="transmembrane region" description="Helical" evidence="2">
    <location>
        <begin position="113"/>
        <end position="133"/>
    </location>
</feature>
<feature type="transmembrane region" description="Helical" evidence="2">
    <location>
        <begin position="178"/>
        <end position="198"/>
    </location>
</feature>
<feature type="transmembrane region" description="Helical" evidence="2">
    <location>
        <begin position="226"/>
        <end position="246"/>
    </location>
</feature>
<feature type="transmembrane region" description="Helical" evidence="2">
    <location>
        <begin position="288"/>
        <end position="308"/>
    </location>
</feature>
<feature type="transmembrane region" description="Helical" evidence="2">
    <location>
        <begin position="320"/>
        <end position="340"/>
    </location>
</feature>
<feature type="transmembrane region" description="Helical" evidence="2">
    <location>
        <begin position="347"/>
        <end position="367"/>
    </location>
</feature>
<feature type="binding site" description="axial binding residue" evidence="2">
    <location>
        <position position="83"/>
    </location>
    <ligand>
        <name>heme b</name>
        <dbReference type="ChEBI" id="CHEBI:60344"/>
        <label>b562</label>
    </ligand>
    <ligandPart>
        <name>Fe</name>
        <dbReference type="ChEBI" id="CHEBI:18248"/>
    </ligandPart>
</feature>
<feature type="binding site" description="axial binding residue" evidence="2">
    <location>
        <position position="97"/>
    </location>
    <ligand>
        <name>heme b</name>
        <dbReference type="ChEBI" id="CHEBI:60344"/>
        <label>b566</label>
    </ligand>
    <ligandPart>
        <name>Fe</name>
        <dbReference type="ChEBI" id="CHEBI:18248"/>
    </ligandPart>
</feature>
<feature type="binding site" description="axial binding residue" evidence="2">
    <location>
        <position position="182"/>
    </location>
    <ligand>
        <name>heme b</name>
        <dbReference type="ChEBI" id="CHEBI:60344"/>
        <label>b562</label>
    </ligand>
    <ligandPart>
        <name>Fe</name>
        <dbReference type="ChEBI" id="CHEBI:18248"/>
    </ligandPart>
</feature>
<feature type="binding site" description="axial binding residue" evidence="2">
    <location>
        <position position="196"/>
    </location>
    <ligand>
        <name>heme b</name>
        <dbReference type="ChEBI" id="CHEBI:60344"/>
        <label>b566</label>
    </ligand>
    <ligandPart>
        <name>Fe</name>
        <dbReference type="ChEBI" id="CHEBI:18248"/>
    </ligandPart>
</feature>
<feature type="binding site" evidence="2">
    <location>
        <position position="201"/>
    </location>
    <ligand>
        <name>a ubiquinone</name>
        <dbReference type="ChEBI" id="CHEBI:16389"/>
    </ligand>
</feature>
<organism>
    <name type="scientific">Meles meles</name>
    <name type="common">Eurasian badger</name>
    <dbReference type="NCBI Taxonomy" id="9662"/>
    <lineage>
        <taxon>Eukaryota</taxon>
        <taxon>Metazoa</taxon>
        <taxon>Chordata</taxon>
        <taxon>Craniata</taxon>
        <taxon>Vertebrata</taxon>
        <taxon>Euteleostomi</taxon>
        <taxon>Mammalia</taxon>
        <taxon>Eutheria</taxon>
        <taxon>Laurasiatheria</taxon>
        <taxon>Carnivora</taxon>
        <taxon>Caniformia</taxon>
        <taxon>Musteloidea</taxon>
        <taxon>Mustelidae</taxon>
        <taxon>Melinae</taxon>
        <taxon>Meles</taxon>
    </lineage>
</organism>
<protein>
    <recommendedName>
        <fullName>Cytochrome b</fullName>
    </recommendedName>
    <alternativeName>
        <fullName>Complex III subunit 3</fullName>
    </alternativeName>
    <alternativeName>
        <fullName>Complex III subunit III</fullName>
    </alternativeName>
    <alternativeName>
        <fullName>Cytochrome b-c1 complex subunit 3</fullName>
    </alternativeName>
    <alternativeName>
        <fullName>Ubiquinol-cytochrome-c reductase complex cytochrome b subunit</fullName>
    </alternativeName>
</protein>
<sequence>MTNIRKSHPLIKIINNSFIDLPAPSNISAWWNFGSLLGICLILQILTGLFLAMHYTPDTTTAFSSVTHICRDVNYGWIIRYMHANGASMFFICLFLHVGRGLYYGSYMFPETWNIGIILLFTVMATAFMGYVLPWGQMSFWGATVITNLLSAIPYIGTNLVEWIWGGFSVDKATLTRFFAFHFILPFIILALAVIHLLFLHETGSNNPFGIPSNSDKIPFHPYYTIKDILGVLLLMLMLMILVLFSPDLLGDPDNYTPANPLNTPPHIKPEWYFLFAYTILRSIPNKLGGVLALIFSILILAIIPSLHTSKQRSMMFRPLSQCLFWLLVADLFTLTWIGGQPVEYPYIAIGQLASILYFTILLILMPATSIIENNLLKW</sequence>
<dbReference type="EMBL" id="AB049808">
    <property type="protein sequence ID" value="BAB71989.1"/>
    <property type="molecule type" value="Genomic_DNA"/>
</dbReference>
<dbReference type="SMR" id="Q8WGL0"/>
<dbReference type="GO" id="GO:0005743">
    <property type="term" value="C:mitochondrial inner membrane"/>
    <property type="evidence" value="ECO:0007669"/>
    <property type="project" value="UniProtKB-SubCell"/>
</dbReference>
<dbReference type="GO" id="GO:0045275">
    <property type="term" value="C:respiratory chain complex III"/>
    <property type="evidence" value="ECO:0007669"/>
    <property type="project" value="InterPro"/>
</dbReference>
<dbReference type="GO" id="GO:0046872">
    <property type="term" value="F:metal ion binding"/>
    <property type="evidence" value="ECO:0007669"/>
    <property type="project" value="UniProtKB-KW"/>
</dbReference>
<dbReference type="GO" id="GO:0008121">
    <property type="term" value="F:ubiquinol-cytochrome-c reductase activity"/>
    <property type="evidence" value="ECO:0007669"/>
    <property type="project" value="InterPro"/>
</dbReference>
<dbReference type="GO" id="GO:0006122">
    <property type="term" value="P:mitochondrial electron transport, ubiquinol to cytochrome c"/>
    <property type="evidence" value="ECO:0007669"/>
    <property type="project" value="TreeGrafter"/>
</dbReference>
<dbReference type="CDD" id="cd00290">
    <property type="entry name" value="cytochrome_b_C"/>
    <property type="match status" value="1"/>
</dbReference>
<dbReference type="CDD" id="cd00284">
    <property type="entry name" value="Cytochrome_b_N"/>
    <property type="match status" value="1"/>
</dbReference>
<dbReference type="FunFam" id="1.20.810.10:FF:000002">
    <property type="entry name" value="Cytochrome b"/>
    <property type="match status" value="1"/>
</dbReference>
<dbReference type="Gene3D" id="1.20.810.10">
    <property type="entry name" value="Cytochrome Bc1 Complex, Chain C"/>
    <property type="match status" value="1"/>
</dbReference>
<dbReference type="InterPro" id="IPR005798">
    <property type="entry name" value="Cyt_b/b6_C"/>
</dbReference>
<dbReference type="InterPro" id="IPR036150">
    <property type="entry name" value="Cyt_b/b6_C_sf"/>
</dbReference>
<dbReference type="InterPro" id="IPR005797">
    <property type="entry name" value="Cyt_b/b6_N"/>
</dbReference>
<dbReference type="InterPro" id="IPR027387">
    <property type="entry name" value="Cytb/b6-like_sf"/>
</dbReference>
<dbReference type="InterPro" id="IPR030689">
    <property type="entry name" value="Cytochrome_b"/>
</dbReference>
<dbReference type="InterPro" id="IPR048260">
    <property type="entry name" value="Cytochrome_b_C_euk/bac"/>
</dbReference>
<dbReference type="InterPro" id="IPR048259">
    <property type="entry name" value="Cytochrome_b_N_euk/bac"/>
</dbReference>
<dbReference type="InterPro" id="IPR016174">
    <property type="entry name" value="Di-haem_cyt_TM"/>
</dbReference>
<dbReference type="PANTHER" id="PTHR19271">
    <property type="entry name" value="CYTOCHROME B"/>
    <property type="match status" value="1"/>
</dbReference>
<dbReference type="PANTHER" id="PTHR19271:SF16">
    <property type="entry name" value="CYTOCHROME B"/>
    <property type="match status" value="1"/>
</dbReference>
<dbReference type="Pfam" id="PF00032">
    <property type="entry name" value="Cytochrom_B_C"/>
    <property type="match status" value="1"/>
</dbReference>
<dbReference type="Pfam" id="PF00033">
    <property type="entry name" value="Cytochrome_B"/>
    <property type="match status" value="1"/>
</dbReference>
<dbReference type="PIRSF" id="PIRSF038885">
    <property type="entry name" value="COB"/>
    <property type="match status" value="1"/>
</dbReference>
<dbReference type="SUPFAM" id="SSF81648">
    <property type="entry name" value="a domain/subunit of cytochrome bc1 complex (Ubiquinol-cytochrome c reductase)"/>
    <property type="match status" value="1"/>
</dbReference>
<dbReference type="SUPFAM" id="SSF81342">
    <property type="entry name" value="Transmembrane di-heme cytochromes"/>
    <property type="match status" value="1"/>
</dbReference>
<dbReference type="PROSITE" id="PS51003">
    <property type="entry name" value="CYTB_CTER"/>
    <property type="match status" value="1"/>
</dbReference>
<dbReference type="PROSITE" id="PS51002">
    <property type="entry name" value="CYTB_NTER"/>
    <property type="match status" value="1"/>
</dbReference>
<comment type="function">
    <text evidence="2">Component of the ubiquinol-cytochrome c reductase complex (complex III or cytochrome b-c1 complex) that is part of the mitochondrial respiratory chain. The b-c1 complex mediates electron transfer from ubiquinol to cytochrome c. Contributes to the generation of a proton gradient across the mitochondrial membrane that is then used for ATP synthesis.</text>
</comment>
<comment type="cofactor">
    <cofactor evidence="2">
        <name>heme b</name>
        <dbReference type="ChEBI" id="CHEBI:60344"/>
    </cofactor>
    <text evidence="2">Binds 2 heme b groups non-covalently.</text>
</comment>
<comment type="subunit">
    <text evidence="2">The cytochrome bc1 complex contains 11 subunits: 3 respiratory subunits (MT-CYB, CYC1 and UQCRFS1), 2 core proteins (UQCRC1 and UQCRC2) and 6 low-molecular weight proteins (UQCRH/QCR6, UQCRB/QCR7, UQCRQ/QCR8, UQCR10/QCR9, UQCR11/QCR10 and a cleavage product of UQCRFS1). This cytochrome bc1 complex then forms a dimer.</text>
</comment>
<comment type="subcellular location">
    <subcellularLocation>
        <location evidence="2">Mitochondrion inner membrane</location>
        <topology evidence="2">Multi-pass membrane protein</topology>
    </subcellularLocation>
</comment>
<comment type="miscellaneous">
    <text evidence="1">Heme 1 (or BL or b562) is low-potential and absorbs at about 562 nm, and heme 2 (or BH or b566) is high-potential and absorbs at about 566 nm.</text>
</comment>
<comment type="similarity">
    <text evidence="3 4">Belongs to the cytochrome b family.</text>
</comment>
<comment type="caution">
    <text evidence="2">The full-length protein contains only eight transmembrane helices, not nine as predicted by bioinformatics tools.</text>
</comment>
<proteinExistence type="inferred from homology"/>
<keyword id="KW-0249">Electron transport</keyword>
<keyword id="KW-0349">Heme</keyword>
<keyword id="KW-0408">Iron</keyword>
<keyword id="KW-0472">Membrane</keyword>
<keyword id="KW-0479">Metal-binding</keyword>
<keyword id="KW-0496">Mitochondrion</keyword>
<keyword id="KW-0999">Mitochondrion inner membrane</keyword>
<keyword id="KW-0679">Respiratory chain</keyword>
<keyword id="KW-0812">Transmembrane</keyword>
<keyword id="KW-1133">Transmembrane helix</keyword>
<keyword id="KW-0813">Transport</keyword>
<keyword id="KW-0830">Ubiquinone</keyword>
<geneLocation type="mitochondrion"/>
<name>CYB_MELME</name>